<gene>
    <name type="ORF">SPCC320.05</name>
</gene>
<evidence type="ECO:0000255" key="1"/>
<evidence type="ECO:0000255" key="2">
    <source>
        <dbReference type="PROSITE-ProRule" id="PRU00198"/>
    </source>
</evidence>
<evidence type="ECO:0000256" key="3">
    <source>
        <dbReference type="SAM" id="MobiDB-lite"/>
    </source>
</evidence>
<evidence type="ECO:0000269" key="4">
    <source>
    </source>
</evidence>
<evidence type="ECO:0000305" key="5"/>
<accession>O59782</accession>
<dbReference type="EMBL" id="CU329672">
    <property type="protein sequence ID" value="CAA18307.1"/>
    <property type="molecule type" value="Genomic_DNA"/>
</dbReference>
<dbReference type="PIR" id="T41306">
    <property type="entry name" value="T41306"/>
</dbReference>
<dbReference type="RefSeq" id="NP_587724.1">
    <property type="nucleotide sequence ID" value="NM_001022719.2"/>
</dbReference>
<dbReference type="SMR" id="O59782"/>
<dbReference type="BioGRID" id="275438">
    <property type="interactions" value="3"/>
</dbReference>
<dbReference type="FunCoup" id="O59782">
    <property type="interactions" value="9"/>
</dbReference>
<dbReference type="STRING" id="284812.O59782"/>
<dbReference type="iPTMnet" id="O59782"/>
<dbReference type="PaxDb" id="4896-SPCC320.05.1"/>
<dbReference type="EnsemblFungi" id="SPCC320.05.1">
    <property type="protein sequence ID" value="SPCC320.05.1:pep"/>
    <property type="gene ID" value="SPCC320.05"/>
</dbReference>
<dbReference type="KEGG" id="spo:2538858"/>
<dbReference type="PomBase" id="SPCC320.05"/>
<dbReference type="VEuPathDB" id="FungiDB:SPCC320.05"/>
<dbReference type="eggNOG" id="KOG0236">
    <property type="taxonomic scope" value="Eukaryota"/>
</dbReference>
<dbReference type="HOGENOM" id="CLU_003182_10_2_1"/>
<dbReference type="InParanoid" id="O59782"/>
<dbReference type="OMA" id="YKDAQRV"/>
<dbReference type="PhylomeDB" id="O59782"/>
<dbReference type="PRO" id="PR:O59782"/>
<dbReference type="Proteomes" id="UP000002485">
    <property type="component" value="Chromosome III"/>
</dbReference>
<dbReference type="GO" id="GO:0005783">
    <property type="term" value="C:endoplasmic reticulum"/>
    <property type="evidence" value="ECO:0007005"/>
    <property type="project" value="PomBase"/>
</dbReference>
<dbReference type="GO" id="GO:0005789">
    <property type="term" value="C:endoplasmic reticulum membrane"/>
    <property type="evidence" value="ECO:0007669"/>
    <property type="project" value="UniProtKB-SubCell"/>
</dbReference>
<dbReference type="GO" id="GO:0000329">
    <property type="term" value="C:fungal-type vacuole membrane"/>
    <property type="evidence" value="ECO:0007005"/>
    <property type="project" value="PomBase"/>
</dbReference>
<dbReference type="GO" id="GO:0005886">
    <property type="term" value="C:plasma membrane"/>
    <property type="evidence" value="ECO:0000318"/>
    <property type="project" value="GO_Central"/>
</dbReference>
<dbReference type="GO" id="GO:0015116">
    <property type="term" value="F:sulfate transmembrane transporter activity"/>
    <property type="evidence" value="ECO:0000318"/>
    <property type="project" value="GO_Central"/>
</dbReference>
<dbReference type="CDD" id="cd07042">
    <property type="entry name" value="STAS_SulP_like_sulfate_transporter"/>
    <property type="match status" value="1"/>
</dbReference>
<dbReference type="Gene3D" id="3.30.750.24">
    <property type="entry name" value="STAS domain"/>
    <property type="match status" value="1"/>
</dbReference>
<dbReference type="InterPro" id="IPR011547">
    <property type="entry name" value="SLC26A/SulP_dom"/>
</dbReference>
<dbReference type="InterPro" id="IPR001902">
    <property type="entry name" value="SLC26A/SulP_fam"/>
</dbReference>
<dbReference type="InterPro" id="IPR002645">
    <property type="entry name" value="STAS_dom"/>
</dbReference>
<dbReference type="InterPro" id="IPR036513">
    <property type="entry name" value="STAS_dom_sf"/>
</dbReference>
<dbReference type="PANTHER" id="PTHR11814">
    <property type="entry name" value="SULFATE TRANSPORTER"/>
    <property type="match status" value="1"/>
</dbReference>
<dbReference type="Pfam" id="PF01740">
    <property type="entry name" value="STAS"/>
    <property type="match status" value="1"/>
</dbReference>
<dbReference type="Pfam" id="PF00916">
    <property type="entry name" value="Sulfate_transp"/>
    <property type="match status" value="1"/>
</dbReference>
<dbReference type="SUPFAM" id="SSF52091">
    <property type="entry name" value="SpoIIaa-like"/>
    <property type="match status" value="1"/>
</dbReference>
<dbReference type="PROSITE" id="PS50801">
    <property type="entry name" value="STAS"/>
    <property type="match status" value="1"/>
</dbReference>
<organism>
    <name type="scientific">Schizosaccharomyces pombe (strain 972 / ATCC 24843)</name>
    <name type="common">Fission yeast</name>
    <dbReference type="NCBI Taxonomy" id="284812"/>
    <lineage>
        <taxon>Eukaryota</taxon>
        <taxon>Fungi</taxon>
        <taxon>Dikarya</taxon>
        <taxon>Ascomycota</taxon>
        <taxon>Taphrinomycotina</taxon>
        <taxon>Schizosaccharomycetes</taxon>
        <taxon>Schizosaccharomycetales</taxon>
        <taxon>Schizosaccharomycetaceae</taxon>
        <taxon>Schizosaccharomyces</taxon>
    </lineage>
</organism>
<proteinExistence type="inferred from homology"/>
<comment type="function">
    <text>Possible sulfate transporter.</text>
</comment>
<comment type="subcellular location">
    <subcellularLocation>
        <location evidence="4">Endoplasmic reticulum membrane</location>
        <topology evidence="4">Multi-pass membrane protein</topology>
    </subcellularLocation>
</comment>
<comment type="similarity">
    <text evidence="5">Belongs to the SLC26A/SulP transporter (TC 2.A.53) family.</text>
</comment>
<name>SULH3_SCHPO</name>
<reference key="1">
    <citation type="journal article" date="2002" name="Nature">
        <title>The genome sequence of Schizosaccharomyces pombe.</title>
        <authorList>
            <person name="Wood V."/>
            <person name="Gwilliam R."/>
            <person name="Rajandream M.A."/>
            <person name="Lyne M.H."/>
            <person name="Lyne R."/>
            <person name="Stewart A."/>
            <person name="Sgouros J.G."/>
            <person name="Peat N."/>
            <person name="Hayles J."/>
            <person name="Baker S.G."/>
            <person name="Basham D."/>
            <person name="Bowman S."/>
            <person name="Brooks K."/>
            <person name="Brown D."/>
            <person name="Brown S."/>
            <person name="Chillingworth T."/>
            <person name="Churcher C.M."/>
            <person name="Collins M."/>
            <person name="Connor R."/>
            <person name="Cronin A."/>
            <person name="Davis P."/>
            <person name="Feltwell T."/>
            <person name="Fraser A."/>
            <person name="Gentles S."/>
            <person name="Goble A."/>
            <person name="Hamlin N."/>
            <person name="Harris D.E."/>
            <person name="Hidalgo J."/>
            <person name="Hodgson G."/>
            <person name="Holroyd S."/>
            <person name="Hornsby T."/>
            <person name="Howarth S."/>
            <person name="Huckle E.J."/>
            <person name="Hunt S."/>
            <person name="Jagels K."/>
            <person name="James K.D."/>
            <person name="Jones L."/>
            <person name="Jones M."/>
            <person name="Leather S."/>
            <person name="McDonald S."/>
            <person name="McLean J."/>
            <person name="Mooney P."/>
            <person name="Moule S."/>
            <person name="Mungall K.L."/>
            <person name="Murphy L.D."/>
            <person name="Niblett D."/>
            <person name="Odell C."/>
            <person name="Oliver K."/>
            <person name="O'Neil S."/>
            <person name="Pearson D."/>
            <person name="Quail M.A."/>
            <person name="Rabbinowitsch E."/>
            <person name="Rutherford K.M."/>
            <person name="Rutter S."/>
            <person name="Saunders D."/>
            <person name="Seeger K."/>
            <person name="Sharp S."/>
            <person name="Skelton J."/>
            <person name="Simmonds M.N."/>
            <person name="Squares R."/>
            <person name="Squares S."/>
            <person name="Stevens K."/>
            <person name="Taylor K."/>
            <person name="Taylor R.G."/>
            <person name="Tivey A."/>
            <person name="Walsh S.V."/>
            <person name="Warren T."/>
            <person name="Whitehead S."/>
            <person name="Woodward J.R."/>
            <person name="Volckaert G."/>
            <person name="Aert R."/>
            <person name="Robben J."/>
            <person name="Grymonprez B."/>
            <person name="Weltjens I."/>
            <person name="Vanstreels E."/>
            <person name="Rieger M."/>
            <person name="Schaefer M."/>
            <person name="Mueller-Auer S."/>
            <person name="Gabel C."/>
            <person name="Fuchs M."/>
            <person name="Duesterhoeft A."/>
            <person name="Fritzc C."/>
            <person name="Holzer E."/>
            <person name="Moestl D."/>
            <person name="Hilbert H."/>
            <person name="Borzym K."/>
            <person name="Langer I."/>
            <person name="Beck A."/>
            <person name="Lehrach H."/>
            <person name="Reinhardt R."/>
            <person name="Pohl T.M."/>
            <person name="Eger P."/>
            <person name="Zimmermann W."/>
            <person name="Wedler H."/>
            <person name="Wambutt R."/>
            <person name="Purnelle B."/>
            <person name="Goffeau A."/>
            <person name="Cadieu E."/>
            <person name="Dreano S."/>
            <person name="Gloux S."/>
            <person name="Lelaure V."/>
            <person name="Mottier S."/>
            <person name="Galibert F."/>
            <person name="Aves S.J."/>
            <person name="Xiang Z."/>
            <person name="Hunt C."/>
            <person name="Moore K."/>
            <person name="Hurst S.M."/>
            <person name="Lucas M."/>
            <person name="Rochet M."/>
            <person name="Gaillardin C."/>
            <person name="Tallada V.A."/>
            <person name="Garzon A."/>
            <person name="Thode G."/>
            <person name="Daga R.R."/>
            <person name="Cruzado L."/>
            <person name="Jimenez J."/>
            <person name="Sanchez M."/>
            <person name="del Rey F."/>
            <person name="Benito J."/>
            <person name="Dominguez A."/>
            <person name="Revuelta J.L."/>
            <person name="Moreno S."/>
            <person name="Armstrong J."/>
            <person name="Forsburg S.L."/>
            <person name="Cerutti L."/>
            <person name="Lowe T."/>
            <person name="McCombie W.R."/>
            <person name="Paulsen I."/>
            <person name="Potashkin J."/>
            <person name="Shpakovski G.V."/>
            <person name="Ussery D."/>
            <person name="Barrell B.G."/>
            <person name="Nurse P."/>
        </authorList>
    </citation>
    <scope>NUCLEOTIDE SEQUENCE [LARGE SCALE GENOMIC DNA]</scope>
    <source>
        <strain>972 / ATCC 24843</strain>
    </source>
</reference>
<reference key="2">
    <citation type="journal article" date="2006" name="Nat. Biotechnol.">
        <title>ORFeome cloning and global analysis of protein localization in the fission yeast Schizosaccharomyces pombe.</title>
        <authorList>
            <person name="Matsuyama A."/>
            <person name="Arai R."/>
            <person name="Yashiroda Y."/>
            <person name="Shirai A."/>
            <person name="Kamata A."/>
            <person name="Sekido S."/>
            <person name="Kobayashi Y."/>
            <person name="Hashimoto A."/>
            <person name="Hamamoto M."/>
            <person name="Hiraoka Y."/>
            <person name="Horinouchi S."/>
            <person name="Yoshida M."/>
        </authorList>
    </citation>
    <scope>SUBCELLULAR LOCATION [LARGE SCALE ANALYSIS]</scope>
</reference>
<feature type="chain" id="PRO_0000303897" description="Probable sulfate permease C320.05">
    <location>
        <begin position="1"/>
        <end position="667"/>
    </location>
</feature>
<feature type="transmembrane region" description="Helical" evidence="1">
    <location>
        <begin position="77"/>
        <end position="97"/>
    </location>
</feature>
<feature type="transmembrane region" description="Helical" evidence="1">
    <location>
        <begin position="102"/>
        <end position="122"/>
    </location>
</feature>
<feature type="transmembrane region" description="Helical" evidence="1">
    <location>
        <begin position="162"/>
        <end position="182"/>
    </location>
</feature>
<feature type="transmembrane region" description="Helical" evidence="1">
    <location>
        <begin position="198"/>
        <end position="218"/>
    </location>
</feature>
<feature type="transmembrane region" description="Helical" evidence="1">
    <location>
        <begin position="240"/>
        <end position="260"/>
    </location>
</feature>
<feature type="transmembrane region" description="Helical" evidence="1">
    <location>
        <begin position="275"/>
        <end position="295"/>
    </location>
</feature>
<feature type="transmembrane region" description="Helical" evidence="1">
    <location>
        <begin position="301"/>
        <end position="321"/>
    </location>
</feature>
<feature type="transmembrane region" description="Helical" evidence="1">
    <location>
        <begin position="336"/>
        <end position="356"/>
    </location>
</feature>
<feature type="transmembrane region" description="Helical" evidence="1">
    <location>
        <begin position="368"/>
        <end position="388"/>
    </location>
</feature>
<feature type="transmembrane region" description="Helical" evidence="1">
    <location>
        <begin position="405"/>
        <end position="425"/>
    </location>
</feature>
<feature type="transmembrane region" description="Helical" evidence="1">
    <location>
        <begin position="433"/>
        <end position="453"/>
    </location>
</feature>
<feature type="transmembrane region" description="Helical" evidence="1">
    <location>
        <begin position="465"/>
        <end position="485"/>
    </location>
</feature>
<feature type="domain" description="STAS" evidence="2">
    <location>
        <begin position="532"/>
        <end position="657"/>
    </location>
</feature>
<feature type="region of interest" description="Disordered" evidence="3">
    <location>
        <begin position="1"/>
        <end position="27"/>
    </location>
</feature>
<feature type="compositionally biased region" description="Polar residues" evidence="3">
    <location>
        <begin position="16"/>
        <end position="25"/>
    </location>
</feature>
<sequence>MSSPSENHLLGPKTSFIDNRTSTSRPLHEIPSYQSLARRSSTWKRANIPQQKPSLVRRINYYIPVLHWLPNYSLRNIIWDVLAGCSTACLSVPIALSFAQTFLGVPPIYILTGTAIGPILYCLFTACPLISIGPEAGMCLLIAENIHQRVLSKADVPQETAILVTGLIAFIAGIINLAAGLFRLGFLDALVSPVLLRGCILSISMIIMINQGSVFFGFSGVKYKGSDFPIDKLMFLIRNMSKANIYTTILSCITISLLIGCRNLKSKLSAKYPRIVSIPDAVIILLLGSFLSKKFDWHSNYGIAILGEIKTTILLPKLPLPEKNKLHFITQSLQTGVMCSFLAFIDTVIAVKAISLQTNNLIRSNRELISLGAANIGSSLFCGLPICGGYLRTKCNIMSGARTQVATIACSVLILLATFFIMPVFSTVPTCMLASMVVSLGVSLFADAAVEIFKLARIRVWWELGIIFSIATCTMMFGLETGIIFGLSITVMQIIRHSTRSRIMFRSPTSNGTAEFILEDAASTLSHRTNPSSTAVESAPRILVVRIPEPLFFANVSQLEDRLNRLEKYGHPRMHPGETPYRRIEDIEVVVFDMVGVSSIDSSALFAFQRILKEYVEHQVEVHLVSLDPQVLHIFEKHGLLDLIGGYDHVQDSIKKVDALCDIELGV</sequence>
<keyword id="KW-0256">Endoplasmic reticulum</keyword>
<keyword id="KW-0472">Membrane</keyword>
<keyword id="KW-1185">Reference proteome</keyword>
<keyword id="KW-0812">Transmembrane</keyword>
<keyword id="KW-1133">Transmembrane helix</keyword>
<keyword id="KW-0813">Transport</keyword>
<protein>
    <recommendedName>
        <fullName>Probable sulfate permease C320.05</fullName>
    </recommendedName>
</protein>